<organism>
    <name type="scientific">Escherichia coli O17:K52:H18 (strain UMN026 / ExPEC)</name>
    <dbReference type="NCBI Taxonomy" id="585056"/>
    <lineage>
        <taxon>Bacteria</taxon>
        <taxon>Pseudomonadati</taxon>
        <taxon>Pseudomonadota</taxon>
        <taxon>Gammaproteobacteria</taxon>
        <taxon>Enterobacterales</taxon>
        <taxon>Enterobacteriaceae</taxon>
        <taxon>Escherichia</taxon>
    </lineage>
</organism>
<protein>
    <recommendedName>
        <fullName evidence="1">DNA ligase B</fullName>
        <ecNumber evidence="1">6.5.1.2</ecNumber>
    </recommendedName>
    <alternativeName>
        <fullName evidence="1">Polydeoxyribonucleotide synthase [NAD(+)] B</fullName>
    </alternativeName>
</protein>
<evidence type="ECO:0000255" key="1">
    <source>
        <dbReference type="HAMAP-Rule" id="MF_01587"/>
    </source>
</evidence>
<gene>
    <name evidence="1" type="primary">ligB</name>
    <name type="ordered locus">ECUMN_4162</name>
</gene>
<feature type="chain" id="PRO_1000147724" description="DNA ligase B">
    <location>
        <begin position="1"/>
        <end position="560"/>
    </location>
</feature>
<feature type="active site" description="N6-AMP-lysine intermediate" evidence="1">
    <location>
        <position position="124"/>
    </location>
</feature>
<name>LIGB_ECOLU</name>
<keyword id="KW-0227">DNA damage</keyword>
<keyword id="KW-0234">DNA repair</keyword>
<keyword id="KW-0235">DNA replication</keyword>
<keyword id="KW-0436">Ligase</keyword>
<keyword id="KW-0520">NAD</keyword>
<comment type="function">
    <text evidence="1">Catalyzes the formation of phosphodiester linkages between 5'-phosphoryl and 3'-hydroxyl groups in double-stranded DNA using NAD as a coenzyme and as the energy source for the reaction.</text>
</comment>
<comment type="catalytic activity">
    <reaction evidence="1">
        <text>NAD(+) + (deoxyribonucleotide)n-3'-hydroxyl + 5'-phospho-(deoxyribonucleotide)m = (deoxyribonucleotide)n+m + AMP + beta-nicotinamide D-nucleotide.</text>
        <dbReference type="EC" id="6.5.1.2"/>
    </reaction>
</comment>
<comment type="similarity">
    <text evidence="1">Belongs to the NAD-dependent DNA ligase family. LigB subfamily.</text>
</comment>
<accession>B7NEV1</accession>
<proteinExistence type="inferred from homology"/>
<sequence>MKVWMAILISILCWQSSAWAVCPAWSPARAQEEISRLQQQIKQWDDDYWKEGKSEVEDGVYDQLSARLTQWQRCFGNETPDVMMPPLNGAVIHPVAHTGVRKMADKIALSLWMRERSDLWVQPKVDGVAVTLVYRDGKLNKAISRGNGLKGEDWTQKVRLISAVPQTVSGPLANSTLQGEIFLKREGHIQQQMGGINARAKVAGLMMRQDDSDTLNSLGVFVWAWPDGPQLMTDRLKELATAGFTLTQTYTRAVKNADEVARVRNAWWKAKLPFVTDGVVVRAAKEPESRHWLPGQAEWLVAWKYQPVAQVAEVKTIQFAVGKSGKISVVASLAPVMLDDKKVQRVNIGSVRRWQEWDIAPGDQILVSLAGQGIPRIDDVVWRGAERTKPTPPENRFNSLTCYFASDVCQEQFISRLVWLGSKQVLGLDGIGEAGWRALHQTHRFEHIFSWLLLTPEQLQNTPGIAKSKSAQLWHQFNLARKQPFTRWVMAMGIPLTRAALNASDERSWSQLLLSTEQFWQQLPGTGSGRARQVIEWKENAQIKKLGSWLAAQQITGFEP</sequence>
<reference key="1">
    <citation type="journal article" date="2009" name="PLoS Genet.">
        <title>Organised genome dynamics in the Escherichia coli species results in highly diverse adaptive paths.</title>
        <authorList>
            <person name="Touchon M."/>
            <person name="Hoede C."/>
            <person name="Tenaillon O."/>
            <person name="Barbe V."/>
            <person name="Baeriswyl S."/>
            <person name="Bidet P."/>
            <person name="Bingen E."/>
            <person name="Bonacorsi S."/>
            <person name="Bouchier C."/>
            <person name="Bouvet O."/>
            <person name="Calteau A."/>
            <person name="Chiapello H."/>
            <person name="Clermont O."/>
            <person name="Cruveiller S."/>
            <person name="Danchin A."/>
            <person name="Diard M."/>
            <person name="Dossat C."/>
            <person name="Karoui M.E."/>
            <person name="Frapy E."/>
            <person name="Garry L."/>
            <person name="Ghigo J.M."/>
            <person name="Gilles A.M."/>
            <person name="Johnson J."/>
            <person name="Le Bouguenec C."/>
            <person name="Lescat M."/>
            <person name="Mangenot S."/>
            <person name="Martinez-Jehanne V."/>
            <person name="Matic I."/>
            <person name="Nassif X."/>
            <person name="Oztas S."/>
            <person name="Petit M.A."/>
            <person name="Pichon C."/>
            <person name="Rouy Z."/>
            <person name="Ruf C.S."/>
            <person name="Schneider D."/>
            <person name="Tourret J."/>
            <person name="Vacherie B."/>
            <person name="Vallenet D."/>
            <person name="Medigue C."/>
            <person name="Rocha E.P.C."/>
            <person name="Denamur E."/>
        </authorList>
    </citation>
    <scope>NUCLEOTIDE SEQUENCE [LARGE SCALE GENOMIC DNA]</scope>
    <source>
        <strain>UMN026 / ExPEC</strain>
    </source>
</reference>
<dbReference type="EC" id="6.5.1.2" evidence="1"/>
<dbReference type="EMBL" id="CU928163">
    <property type="protein sequence ID" value="CAR15303.1"/>
    <property type="molecule type" value="Genomic_DNA"/>
</dbReference>
<dbReference type="RefSeq" id="WP_001309848.1">
    <property type="nucleotide sequence ID" value="NC_011751.1"/>
</dbReference>
<dbReference type="RefSeq" id="YP_002414800.1">
    <property type="nucleotide sequence ID" value="NC_011751.1"/>
</dbReference>
<dbReference type="SMR" id="B7NEV1"/>
<dbReference type="STRING" id="585056.ECUMN_4162"/>
<dbReference type="KEGG" id="eum:ECUMN_4162"/>
<dbReference type="PATRIC" id="fig|585056.7.peg.4336"/>
<dbReference type="HOGENOM" id="CLU_489786_0_0_6"/>
<dbReference type="Proteomes" id="UP000007097">
    <property type="component" value="Chromosome"/>
</dbReference>
<dbReference type="GO" id="GO:0003911">
    <property type="term" value="F:DNA ligase (NAD+) activity"/>
    <property type="evidence" value="ECO:0007669"/>
    <property type="project" value="UniProtKB-UniRule"/>
</dbReference>
<dbReference type="GO" id="GO:0006281">
    <property type="term" value="P:DNA repair"/>
    <property type="evidence" value="ECO:0007669"/>
    <property type="project" value="UniProtKB-KW"/>
</dbReference>
<dbReference type="GO" id="GO:0006260">
    <property type="term" value="P:DNA replication"/>
    <property type="evidence" value="ECO:0007669"/>
    <property type="project" value="UniProtKB-KW"/>
</dbReference>
<dbReference type="FunFam" id="1.10.287.610:FF:000003">
    <property type="entry name" value="DNA ligase B"/>
    <property type="match status" value="1"/>
</dbReference>
<dbReference type="FunFam" id="2.40.50.140:FF:000139">
    <property type="entry name" value="DNA ligase B"/>
    <property type="match status" value="1"/>
</dbReference>
<dbReference type="FunFam" id="3.30.470.30:FF:000007">
    <property type="entry name" value="DNA ligase B"/>
    <property type="match status" value="1"/>
</dbReference>
<dbReference type="Gene3D" id="3.30.470.30">
    <property type="entry name" value="DNA ligase/mRNA capping enzyme"/>
    <property type="match status" value="1"/>
</dbReference>
<dbReference type="Gene3D" id="1.10.287.610">
    <property type="entry name" value="Helix hairpin bin"/>
    <property type="match status" value="1"/>
</dbReference>
<dbReference type="Gene3D" id="2.40.50.140">
    <property type="entry name" value="Nucleic acid-binding proteins"/>
    <property type="match status" value="1"/>
</dbReference>
<dbReference type="HAMAP" id="MF_01587">
    <property type="entry name" value="DNA_ligase_B"/>
    <property type="match status" value="1"/>
</dbReference>
<dbReference type="InterPro" id="IPR018239">
    <property type="entry name" value="DNA_ligase_AS"/>
</dbReference>
<dbReference type="InterPro" id="IPR020923">
    <property type="entry name" value="DNA_ligase_B"/>
</dbReference>
<dbReference type="InterPro" id="IPR033136">
    <property type="entry name" value="DNA_ligase_CS"/>
</dbReference>
<dbReference type="InterPro" id="IPR013839">
    <property type="entry name" value="DNAligase_adenylation"/>
</dbReference>
<dbReference type="InterPro" id="IPR013840">
    <property type="entry name" value="DNAligase_N"/>
</dbReference>
<dbReference type="InterPro" id="IPR012340">
    <property type="entry name" value="NA-bd_OB-fold"/>
</dbReference>
<dbReference type="InterPro" id="IPR050326">
    <property type="entry name" value="NAD_dep_DNA_ligaseB"/>
</dbReference>
<dbReference type="InterPro" id="IPR004150">
    <property type="entry name" value="NAD_DNA_ligase_OB"/>
</dbReference>
<dbReference type="InterPro" id="IPR010994">
    <property type="entry name" value="RuvA_2-like"/>
</dbReference>
<dbReference type="NCBIfam" id="NF005987">
    <property type="entry name" value="PRK08097.1"/>
    <property type="match status" value="1"/>
</dbReference>
<dbReference type="PANTHER" id="PTHR47810">
    <property type="entry name" value="DNA LIGASE"/>
    <property type="match status" value="1"/>
</dbReference>
<dbReference type="PANTHER" id="PTHR47810:SF1">
    <property type="entry name" value="DNA LIGASE B"/>
    <property type="match status" value="1"/>
</dbReference>
<dbReference type="Pfam" id="PF01653">
    <property type="entry name" value="DNA_ligase_aden"/>
    <property type="match status" value="1"/>
</dbReference>
<dbReference type="Pfam" id="PF03120">
    <property type="entry name" value="DNA_ligase_OB"/>
    <property type="match status" value="1"/>
</dbReference>
<dbReference type="SMART" id="SM00532">
    <property type="entry name" value="LIGANc"/>
    <property type="match status" value="1"/>
</dbReference>
<dbReference type="SUPFAM" id="SSF56091">
    <property type="entry name" value="DNA ligase/mRNA capping enzyme, catalytic domain"/>
    <property type="match status" value="1"/>
</dbReference>
<dbReference type="SUPFAM" id="SSF50249">
    <property type="entry name" value="Nucleic acid-binding proteins"/>
    <property type="match status" value="1"/>
</dbReference>
<dbReference type="SUPFAM" id="SSF47781">
    <property type="entry name" value="RuvA domain 2-like"/>
    <property type="match status" value="1"/>
</dbReference>
<dbReference type="PROSITE" id="PS01055">
    <property type="entry name" value="DNA_LIGASE_N1"/>
    <property type="match status" value="1"/>
</dbReference>
<dbReference type="PROSITE" id="PS01056">
    <property type="entry name" value="DNA_LIGASE_N2"/>
    <property type="match status" value="1"/>
</dbReference>